<organism>
    <name type="scientific">Escherichia coli O6:H1 (strain CFT073 / ATCC 700928 / UPEC)</name>
    <dbReference type="NCBI Taxonomy" id="199310"/>
    <lineage>
        <taxon>Bacteria</taxon>
        <taxon>Pseudomonadati</taxon>
        <taxon>Pseudomonadota</taxon>
        <taxon>Gammaproteobacteria</taxon>
        <taxon>Enterobacterales</taxon>
        <taxon>Enterobacteriaceae</taxon>
        <taxon>Escherichia</taxon>
    </lineage>
</organism>
<proteinExistence type="predicted"/>
<keyword id="KW-0472">Membrane</keyword>
<keyword id="KW-1185">Reference proteome</keyword>
<keyword id="KW-0812">Transmembrane</keyword>
<keyword id="KW-1133">Transmembrane helix</keyword>
<reference key="1">
    <citation type="journal article" date="2002" name="Proc. Natl. Acad. Sci. U.S.A.">
        <title>Extensive mosaic structure revealed by the complete genome sequence of uropathogenic Escherichia coli.</title>
        <authorList>
            <person name="Welch R.A."/>
            <person name="Burland V."/>
            <person name="Plunkett G. III"/>
            <person name="Redford P."/>
            <person name="Roesch P."/>
            <person name="Rasko D."/>
            <person name="Buckles E.L."/>
            <person name="Liou S.-R."/>
            <person name="Boutin A."/>
            <person name="Hackett J."/>
            <person name="Stroud D."/>
            <person name="Mayhew G.F."/>
            <person name="Rose D.J."/>
            <person name="Zhou S."/>
            <person name="Schwartz D.C."/>
            <person name="Perna N.T."/>
            <person name="Mobley H.L.T."/>
            <person name="Donnenberg M.S."/>
            <person name="Blattner F.R."/>
        </authorList>
    </citation>
    <scope>NUCLEOTIDE SEQUENCE [LARGE SCALE GENOMIC DNA]</scope>
    <source>
        <strain>CFT073 / ATCC 700928 / UPEC</strain>
    </source>
</reference>
<sequence>MNDQMFVETLIITSSFFAIAAVLVLSVLLIERTG</sequence>
<dbReference type="EMBL" id="AE014075">
    <property type="protein sequence ID" value="AAN80652.1"/>
    <property type="status" value="ALT_INIT"/>
    <property type="molecule type" value="Genomic_DNA"/>
</dbReference>
<dbReference type="RefSeq" id="WP_000999628.1">
    <property type="nucleotide sequence ID" value="NZ_CP051263.1"/>
</dbReference>
<dbReference type="SMR" id="Q8FGW2"/>
<dbReference type="KEGG" id="ecc:c2193"/>
<dbReference type="eggNOG" id="ENOG5031KWU">
    <property type="taxonomic scope" value="Bacteria"/>
</dbReference>
<dbReference type="HOGENOM" id="CLU_216793_1_0_6"/>
<dbReference type="Proteomes" id="UP000001410">
    <property type="component" value="Chromosome"/>
</dbReference>
<dbReference type="GO" id="GO:0016020">
    <property type="term" value="C:membrane"/>
    <property type="evidence" value="ECO:0007669"/>
    <property type="project" value="UniProtKB-SubCell"/>
</dbReference>
<dbReference type="InterPro" id="IPR048191">
    <property type="entry name" value="YoaI-like"/>
</dbReference>
<dbReference type="NCBIfam" id="NF041475">
    <property type="entry name" value="membrane_YoaI"/>
    <property type="match status" value="1"/>
</dbReference>
<protein>
    <recommendedName>
        <fullName>Uncharacterized protein YoaI</fullName>
    </recommendedName>
</protein>
<feature type="chain" id="PRO_0000248925" description="Uncharacterized protein YoaI">
    <location>
        <begin position="1"/>
        <end position="34"/>
    </location>
</feature>
<feature type="transmembrane region" description="Helical" evidence="1">
    <location>
        <begin position="10"/>
        <end position="30"/>
    </location>
</feature>
<accession>Q8FGW2</accession>
<evidence type="ECO:0000255" key="1"/>
<evidence type="ECO:0000305" key="2"/>
<gene>
    <name type="primary">yoaI</name>
    <name type="ordered locus">c2193</name>
</gene>
<name>YOAI_ECOL6</name>
<comment type="subcellular location">
    <subcellularLocation>
        <location evidence="2">Membrane</location>
        <topology evidence="2">Single-pass membrane protein</topology>
    </subcellularLocation>
</comment>
<comment type="sequence caution" evidence="2">
    <conflict type="erroneous initiation">
        <sequence resource="EMBL-CDS" id="AAN80652"/>
    </conflict>
</comment>